<protein>
    <recommendedName>
        <fullName>Lysosomal acid lipase/cholesteryl ester hydrolase</fullName>
        <shortName>Acid cholesteryl ester hydrolase</shortName>
        <shortName>LAL</shortName>
        <ecNumber evidence="2">3.1.1.13</ecNumber>
    </recommendedName>
    <alternativeName>
        <fullName>Cholesteryl esterase</fullName>
    </alternativeName>
    <alternativeName>
        <fullName>Diacylglycerol lipase</fullName>
    </alternativeName>
    <alternativeName>
        <fullName>Lipase A</fullName>
    </alternativeName>
    <alternativeName>
        <fullName>Sterol esterase</fullName>
    </alternativeName>
    <alternativeName>
        <fullName>Triacylglycerol ester hydrolase</fullName>
    </alternativeName>
    <alternativeName>
        <fullName>Triacylglycerol lipase</fullName>
    </alternativeName>
</protein>
<comment type="function">
    <text evidence="2">Catalyzes the deacylation of cholesteryl ester core lipids of endocytosed low density lipoproteins to generate free fatty acids and cholesterol. Hydrolyzes triglycerides (1,2,3-triacylglycerol) and diglycerides (such as 1,2-diacylglycerol and 1,3-diacylglycerol) with preference for the acyl moieties at the sn-1 or sn-3 positions.</text>
</comment>
<comment type="catalytic activity">
    <reaction evidence="2">
        <text>a sterol ester + H2O = a sterol + a fatty acid + H(+)</text>
        <dbReference type="Rhea" id="RHEA:10100"/>
        <dbReference type="ChEBI" id="CHEBI:15377"/>
        <dbReference type="ChEBI" id="CHEBI:15378"/>
        <dbReference type="ChEBI" id="CHEBI:15889"/>
        <dbReference type="ChEBI" id="CHEBI:28868"/>
        <dbReference type="ChEBI" id="CHEBI:35915"/>
        <dbReference type="EC" id="3.1.1.13"/>
    </reaction>
</comment>
<comment type="catalytic activity">
    <reaction evidence="2">
        <text>cholesteryl (9Z-octadecenoate) + H2O = cholesterol + (9Z)-octadecenoate + H(+)</text>
        <dbReference type="Rhea" id="RHEA:33875"/>
        <dbReference type="ChEBI" id="CHEBI:15377"/>
        <dbReference type="ChEBI" id="CHEBI:15378"/>
        <dbReference type="ChEBI" id="CHEBI:16113"/>
        <dbReference type="ChEBI" id="CHEBI:30823"/>
        <dbReference type="ChEBI" id="CHEBI:46898"/>
    </reaction>
    <physiologicalReaction direction="left-to-right" evidence="2">
        <dbReference type="Rhea" id="RHEA:33876"/>
    </physiologicalReaction>
</comment>
<comment type="catalytic activity">
    <reaction evidence="2">
        <text>a triacylglycerol + H2O = a 1,2-diacylglycerol + a fatty acid + H(+)</text>
        <dbReference type="Rhea" id="RHEA:35667"/>
        <dbReference type="ChEBI" id="CHEBI:15377"/>
        <dbReference type="ChEBI" id="CHEBI:15378"/>
        <dbReference type="ChEBI" id="CHEBI:17855"/>
        <dbReference type="ChEBI" id="CHEBI:28868"/>
        <dbReference type="ChEBI" id="CHEBI:49172"/>
    </reaction>
    <physiologicalReaction direction="left-to-right" evidence="2">
        <dbReference type="Rhea" id="RHEA:35668"/>
    </physiologicalReaction>
</comment>
<comment type="catalytic activity">
    <reaction evidence="2">
        <text>1,2-di-(9Z-octadecenoyl)-glycerol + (9Z)-octadecenoate + H(+) = 1,2,3-tri-(9Z-octadecenoyl)-glycerol + H2O</text>
        <dbReference type="Rhea" id="RHEA:38379"/>
        <dbReference type="ChEBI" id="CHEBI:15377"/>
        <dbReference type="ChEBI" id="CHEBI:15378"/>
        <dbReference type="ChEBI" id="CHEBI:30823"/>
        <dbReference type="ChEBI" id="CHEBI:52323"/>
        <dbReference type="ChEBI" id="CHEBI:53753"/>
    </reaction>
    <physiologicalReaction direction="right-to-left" evidence="2">
        <dbReference type="Rhea" id="RHEA:38381"/>
    </physiologicalReaction>
</comment>
<comment type="catalytic activity">
    <reaction evidence="2">
        <text>a 1,2-diacylglycerol + H2O = a 1-acylglycerol + a fatty acid + H(+)</text>
        <dbReference type="Rhea" id="RHEA:44712"/>
        <dbReference type="ChEBI" id="CHEBI:15377"/>
        <dbReference type="ChEBI" id="CHEBI:15378"/>
        <dbReference type="ChEBI" id="CHEBI:28868"/>
        <dbReference type="ChEBI" id="CHEBI:35759"/>
        <dbReference type="ChEBI" id="CHEBI:49172"/>
    </reaction>
    <physiologicalReaction direction="left-to-right" evidence="2">
        <dbReference type="Rhea" id="RHEA:44713"/>
    </physiologicalReaction>
</comment>
<comment type="catalytic activity">
    <reaction evidence="2">
        <text>1,2-di-(9Z-octadecenoyl)-glycerol + H2O = 1-(9Z-octadecenoyl)-glycerol + (9Z)-octadecenoate + H(+)</text>
        <dbReference type="Rhea" id="RHEA:40967"/>
        <dbReference type="ChEBI" id="CHEBI:15377"/>
        <dbReference type="ChEBI" id="CHEBI:15378"/>
        <dbReference type="ChEBI" id="CHEBI:30823"/>
        <dbReference type="ChEBI" id="CHEBI:52323"/>
        <dbReference type="ChEBI" id="CHEBI:75342"/>
    </reaction>
    <physiologicalReaction direction="left-to-right" evidence="2">
        <dbReference type="Rhea" id="RHEA:40968"/>
    </physiologicalReaction>
</comment>
<comment type="catalytic activity">
    <reaction evidence="2">
        <text>a 1,3-diacylglycerol + H2O = a 1-acylglycerol + a fatty acid + H(+)</text>
        <dbReference type="Rhea" id="RHEA:78019"/>
        <dbReference type="ChEBI" id="CHEBI:15377"/>
        <dbReference type="ChEBI" id="CHEBI:15378"/>
        <dbReference type="ChEBI" id="CHEBI:28868"/>
        <dbReference type="ChEBI" id="CHEBI:35759"/>
        <dbReference type="ChEBI" id="CHEBI:47777"/>
    </reaction>
    <physiologicalReaction direction="left-to-right" evidence="2">
        <dbReference type="Rhea" id="RHEA:78020"/>
    </physiologicalReaction>
</comment>
<comment type="catalytic activity">
    <reaction evidence="2">
        <text>1,3-di-(9Z-octadecenoyl)-glycerol + H2O = 1-(9Z-octadecenoyl)-glycerol + (9Z)-octadecenoate + H(+)</text>
        <dbReference type="Rhea" id="RHEA:39939"/>
        <dbReference type="ChEBI" id="CHEBI:15377"/>
        <dbReference type="ChEBI" id="CHEBI:15378"/>
        <dbReference type="ChEBI" id="CHEBI:30823"/>
        <dbReference type="ChEBI" id="CHEBI:75342"/>
        <dbReference type="ChEBI" id="CHEBI:75735"/>
    </reaction>
    <physiologicalReaction direction="left-to-right" evidence="2">
        <dbReference type="Rhea" id="RHEA:39940"/>
    </physiologicalReaction>
</comment>
<comment type="subunit">
    <text evidence="2">Monomer.</text>
</comment>
<comment type="subcellular location">
    <subcellularLocation>
        <location evidence="4">Lysosome</location>
    </subcellularLocation>
</comment>
<comment type="PTM">
    <text evidence="2">Glycosylation is not essential for catalytic activity.</text>
</comment>
<comment type="similarity">
    <text evidence="5">Belongs to the AB hydrolase superfamily. Lipase family.</text>
</comment>
<reference key="1">
    <citation type="journal article" date="1995" name="J. Lipid Res.">
        <title>Cloning of rat lysosomal acid lipase cDNA and identification of the mutation in the rat model of Wolman's disease.</title>
        <authorList>
            <person name="Nakagawa H."/>
            <person name="Matsubara S."/>
            <person name="Kuriyama M."/>
            <person name="Yoshidome H."/>
            <person name="Fujiyama J."/>
            <person name="Yoshida H."/>
            <person name="Osame M."/>
        </authorList>
    </citation>
    <scope>NUCLEOTIDE SEQUENCE [MRNA]</scope>
    <source>
        <tissue>Liver</tissue>
    </source>
</reference>
<reference key="2">
    <citation type="journal article" date="1985" name="Biochem. Int.">
        <title>Subcellular localization of acid lipase in rat liver.</title>
        <authorList>
            <person name="Amanuma K."/>
            <person name="Okada J."/>
            <person name="Imanaka T."/>
            <person name="Ohkuma S."/>
            <person name="Takano T."/>
        </authorList>
    </citation>
    <scope>SUBCELLULAR LOCATION</scope>
</reference>
<name>LICH_RAT</name>
<keyword id="KW-0325">Glycoprotein</keyword>
<keyword id="KW-0378">Hydrolase</keyword>
<keyword id="KW-0442">Lipid degradation</keyword>
<keyword id="KW-0443">Lipid metabolism</keyword>
<keyword id="KW-0458">Lysosome</keyword>
<keyword id="KW-1185">Reference proteome</keyword>
<keyword id="KW-0732">Signal</keyword>
<organism>
    <name type="scientific">Rattus norvegicus</name>
    <name type="common">Rat</name>
    <dbReference type="NCBI Taxonomy" id="10116"/>
    <lineage>
        <taxon>Eukaryota</taxon>
        <taxon>Metazoa</taxon>
        <taxon>Chordata</taxon>
        <taxon>Craniata</taxon>
        <taxon>Vertebrata</taxon>
        <taxon>Euteleostomi</taxon>
        <taxon>Mammalia</taxon>
        <taxon>Eutheria</taxon>
        <taxon>Euarchontoglires</taxon>
        <taxon>Glires</taxon>
        <taxon>Rodentia</taxon>
        <taxon>Myomorpha</taxon>
        <taxon>Muroidea</taxon>
        <taxon>Muridae</taxon>
        <taxon>Murinae</taxon>
        <taxon>Rattus</taxon>
    </lineage>
</organism>
<accession>Q64194</accession>
<feature type="signal peptide" evidence="3">
    <location>
        <begin position="1"/>
        <end position="25"/>
    </location>
</feature>
<feature type="propeptide" id="PRO_0000450228" description="Removed in mature form" evidence="2">
    <location>
        <begin position="26"/>
        <end position="72"/>
    </location>
</feature>
<feature type="chain" id="PRO_0000017801" description="Lysosomal acid lipase/cholesteryl ester hydrolase">
    <location>
        <begin position="73"/>
        <end position="397"/>
    </location>
</feature>
<feature type="domain" description="AB hydrolase-1" evidence="3">
    <location>
        <begin position="84"/>
        <end position="378"/>
    </location>
</feature>
<feature type="active site" description="Charge relay system" evidence="1">
    <location>
        <position position="172"/>
    </location>
</feature>
<feature type="active site" description="Charge relay system" evidence="1">
    <location>
        <position position="372"/>
    </location>
</feature>
<feature type="glycosylation site" description="N-linked (GlcNAc...) asparagine" evidence="3">
    <location>
        <position position="34"/>
    </location>
</feature>
<feature type="glycosylation site" description="N-linked (GlcNAc...) asparagine" evidence="3">
    <location>
        <position position="99"/>
    </location>
</feature>
<feature type="glycosylation site" description="N-linked (GlcNAc...) asparagine" evidence="3">
    <location>
        <position position="159"/>
    </location>
</feature>
<feature type="glycosylation site" description="N-linked (GlcNAc...) asparagine" evidence="3">
    <location>
        <position position="271"/>
    </location>
</feature>
<feature type="glycosylation site" description="N-linked (GlcNAc...) asparagine" evidence="3">
    <location>
        <position position="319"/>
    </location>
</feature>
<evidence type="ECO:0000250" key="1"/>
<evidence type="ECO:0000250" key="2">
    <source>
        <dbReference type="UniProtKB" id="P38571"/>
    </source>
</evidence>
<evidence type="ECO:0000255" key="3"/>
<evidence type="ECO:0000269" key="4">
    <source>
    </source>
</evidence>
<evidence type="ECO:0000305" key="5"/>
<dbReference type="EC" id="3.1.1.13" evidence="2"/>
<dbReference type="EMBL" id="S81497">
    <property type="protein sequence ID" value="AAB36043.2"/>
    <property type="molecule type" value="mRNA"/>
</dbReference>
<dbReference type="SMR" id="Q64194"/>
<dbReference type="FunCoup" id="Q64194">
    <property type="interactions" value="440"/>
</dbReference>
<dbReference type="IntAct" id="Q64194">
    <property type="interactions" value="1"/>
</dbReference>
<dbReference type="STRING" id="10116.ENSRNOP00000074398"/>
<dbReference type="ChEMBL" id="CHEMBL2352"/>
<dbReference type="ESTHER" id="ratno-1llip">
    <property type="family name" value="Acidic_Lipase"/>
</dbReference>
<dbReference type="GlyCosmos" id="Q64194">
    <property type="glycosylation" value="5 sites, No reported glycans"/>
</dbReference>
<dbReference type="GlyGen" id="Q64194">
    <property type="glycosylation" value="6 sites"/>
</dbReference>
<dbReference type="PhosphoSitePlus" id="Q64194"/>
<dbReference type="PaxDb" id="10116-ENSRNOP00000025845"/>
<dbReference type="AGR" id="RGD:3008"/>
<dbReference type="RGD" id="3008">
    <property type="gene designation" value="Lipa"/>
</dbReference>
<dbReference type="eggNOG" id="KOG2624">
    <property type="taxonomic scope" value="Eukaryota"/>
</dbReference>
<dbReference type="InParanoid" id="Q64194"/>
<dbReference type="PhylomeDB" id="Q64194"/>
<dbReference type="Reactome" id="R-RNO-8964038">
    <property type="pathway name" value="LDL clearance"/>
</dbReference>
<dbReference type="PRO" id="PR:Q64194"/>
<dbReference type="Proteomes" id="UP000002494">
    <property type="component" value="Unplaced"/>
</dbReference>
<dbReference type="GO" id="GO:0043231">
    <property type="term" value="C:intracellular membrane-bounded organelle"/>
    <property type="evidence" value="ECO:0000318"/>
    <property type="project" value="GO_Central"/>
</dbReference>
<dbReference type="GO" id="GO:0005764">
    <property type="term" value="C:lysosome"/>
    <property type="evidence" value="ECO:0000314"/>
    <property type="project" value="UniProtKB"/>
</dbReference>
<dbReference type="GO" id="GO:0016298">
    <property type="term" value="F:lipase activity"/>
    <property type="evidence" value="ECO:0000314"/>
    <property type="project" value="RGD"/>
</dbReference>
<dbReference type="GO" id="GO:0004771">
    <property type="term" value="F:sterol ester esterase activity"/>
    <property type="evidence" value="ECO:0000314"/>
    <property type="project" value="RGD"/>
</dbReference>
<dbReference type="GO" id="GO:0002526">
    <property type="term" value="P:acute inflammatory response"/>
    <property type="evidence" value="ECO:0000266"/>
    <property type="project" value="RGD"/>
</dbReference>
<dbReference type="GO" id="GO:1990845">
    <property type="term" value="P:adaptive thermogenesis"/>
    <property type="evidence" value="ECO:0000266"/>
    <property type="project" value="RGD"/>
</dbReference>
<dbReference type="GO" id="GO:0060612">
    <property type="term" value="P:adipose tissue development"/>
    <property type="evidence" value="ECO:0000266"/>
    <property type="project" value="RGD"/>
</dbReference>
<dbReference type="GO" id="GO:0006754">
    <property type="term" value="P:ATP biosynthetic process"/>
    <property type="evidence" value="ECO:0000266"/>
    <property type="project" value="RGD"/>
</dbReference>
<dbReference type="GO" id="GO:0060837">
    <property type="term" value="P:blood vessel endothelial cell differentiation"/>
    <property type="evidence" value="ECO:0000266"/>
    <property type="project" value="RGD"/>
</dbReference>
<dbReference type="GO" id="GO:0048539">
    <property type="term" value="P:bone marrow development"/>
    <property type="evidence" value="ECO:0000266"/>
    <property type="project" value="RGD"/>
</dbReference>
<dbReference type="GO" id="GO:0000902">
    <property type="term" value="P:cell morphogenesis"/>
    <property type="evidence" value="ECO:0000266"/>
    <property type="project" value="RGD"/>
</dbReference>
<dbReference type="GO" id="GO:0008283">
    <property type="term" value="P:cell population proliferation"/>
    <property type="evidence" value="ECO:0000266"/>
    <property type="project" value="RGD"/>
</dbReference>
<dbReference type="GO" id="GO:0071838">
    <property type="term" value="P:cell proliferation in bone marrow"/>
    <property type="evidence" value="ECO:0000266"/>
    <property type="project" value="RGD"/>
</dbReference>
<dbReference type="GO" id="GO:0006695">
    <property type="term" value="P:cholesterol biosynthetic process"/>
    <property type="evidence" value="ECO:0000266"/>
    <property type="project" value="RGD"/>
</dbReference>
<dbReference type="GO" id="GO:0033344">
    <property type="term" value="P:cholesterol efflux"/>
    <property type="evidence" value="ECO:0000266"/>
    <property type="project" value="RGD"/>
</dbReference>
<dbReference type="GO" id="GO:0008203">
    <property type="term" value="P:cholesterol metabolic process"/>
    <property type="evidence" value="ECO:0000266"/>
    <property type="project" value="RGD"/>
</dbReference>
<dbReference type="GO" id="GO:0010878">
    <property type="term" value="P:cholesterol storage"/>
    <property type="evidence" value="ECO:0000266"/>
    <property type="project" value="RGD"/>
</dbReference>
<dbReference type="GO" id="GO:0030301">
    <property type="term" value="P:cholesterol transport"/>
    <property type="evidence" value="ECO:0000266"/>
    <property type="project" value="RGD"/>
</dbReference>
<dbReference type="GO" id="GO:0035726">
    <property type="term" value="P:common myeloid progenitor cell proliferation"/>
    <property type="evidence" value="ECO:0000266"/>
    <property type="project" value="RGD"/>
</dbReference>
<dbReference type="GO" id="GO:0030421">
    <property type="term" value="P:defecation"/>
    <property type="evidence" value="ECO:0000266"/>
    <property type="project" value="RGD"/>
</dbReference>
<dbReference type="GO" id="GO:0008340">
    <property type="term" value="P:determination of adult lifespan"/>
    <property type="evidence" value="ECO:0000266"/>
    <property type="project" value="RGD"/>
</dbReference>
<dbReference type="GO" id="GO:0006897">
    <property type="term" value="P:endocytosis"/>
    <property type="evidence" value="ECO:0000266"/>
    <property type="project" value="RGD"/>
</dbReference>
<dbReference type="GO" id="GO:0008333">
    <property type="term" value="P:endosome to lysosome transport"/>
    <property type="evidence" value="ECO:0000266"/>
    <property type="project" value="RGD"/>
</dbReference>
<dbReference type="GO" id="GO:0001935">
    <property type="term" value="P:endothelial cell proliferation"/>
    <property type="evidence" value="ECO:0000266"/>
    <property type="project" value="RGD"/>
</dbReference>
<dbReference type="GO" id="GO:0097009">
    <property type="term" value="P:energy homeostasis"/>
    <property type="evidence" value="ECO:0000266"/>
    <property type="project" value="RGD"/>
</dbReference>
<dbReference type="GO" id="GO:0050673">
    <property type="term" value="P:epithelial cell proliferation"/>
    <property type="evidence" value="ECO:0000266"/>
    <property type="project" value="RGD"/>
</dbReference>
<dbReference type="GO" id="GO:0070341">
    <property type="term" value="P:fat cell proliferation"/>
    <property type="evidence" value="ECO:0000266"/>
    <property type="project" value="RGD"/>
</dbReference>
<dbReference type="GO" id="GO:0006631">
    <property type="term" value="P:fatty acid metabolic process"/>
    <property type="evidence" value="ECO:0000314"/>
    <property type="project" value="RGD"/>
</dbReference>
<dbReference type="GO" id="GO:0010467">
    <property type="term" value="P:gene expression"/>
    <property type="evidence" value="ECO:0000266"/>
    <property type="project" value="RGD"/>
</dbReference>
<dbReference type="GO" id="GO:0006006">
    <property type="term" value="P:glucose metabolic process"/>
    <property type="evidence" value="ECO:0000266"/>
    <property type="project" value="RGD"/>
</dbReference>
<dbReference type="GO" id="GO:0006096">
    <property type="term" value="P:glycolytic process"/>
    <property type="evidence" value="ECO:0000266"/>
    <property type="project" value="RGD"/>
</dbReference>
<dbReference type="GO" id="GO:0002244">
    <property type="term" value="P:hematopoietic progenitor cell differentiation"/>
    <property type="evidence" value="ECO:0000266"/>
    <property type="project" value="RGD"/>
</dbReference>
<dbReference type="GO" id="GO:0030097">
    <property type="term" value="P:hemopoiesis"/>
    <property type="evidence" value="ECO:0000266"/>
    <property type="project" value="RGD"/>
</dbReference>
<dbReference type="GO" id="GO:0048872">
    <property type="term" value="P:homeostasis of number of cells"/>
    <property type="evidence" value="ECO:0000266"/>
    <property type="project" value="RGD"/>
</dbReference>
<dbReference type="GO" id="GO:0048873">
    <property type="term" value="P:homeostasis of number of cells within a tissue"/>
    <property type="evidence" value="ECO:0000266"/>
    <property type="project" value="RGD"/>
</dbReference>
<dbReference type="GO" id="GO:0006954">
    <property type="term" value="P:inflammatory response"/>
    <property type="evidence" value="ECO:0000266"/>
    <property type="project" value="RGD"/>
</dbReference>
<dbReference type="GO" id="GO:0008610">
    <property type="term" value="P:lipid biosynthetic process"/>
    <property type="evidence" value="ECO:0000266"/>
    <property type="project" value="RGD"/>
</dbReference>
<dbReference type="GO" id="GO:0016042">
    <property type="term" value="P:lipid catabolic process"/>
    <property type="evidence" value="ECO:0007669"/>
    <property type="project" value="UniProtKB-KW"/>
</dbReference>
<dbReference type="GO" id="GO:0055088">
    <property type="term" value="P:lipid homeostasis"/>
    <property type="evidence" value="ECO:0000266"/>
    <property type="project" value="RGD"/>
</dbReference>
<dbReference type="GO" id="GO:0140354">
    <property type="term" value="P:lipid import into cell"/>
    <property type="evidence" value="ECO:0000266"/>
    <property type="project" value="RGD"/>
</dbReference>
<dbReference type="GO" id="GO:0006629">
    <property type="term" value="P:lipid metabolic process"/>
    <property type="evidence" value="ECO:0000266"/>
    <property type="project" value="RGD"/>
</dbReference>
<dbReference type="GO" id="GO:0019915">
    <property type="term" value="P:lipid storage"/>
    <property type="evidence" value="ECO:0000266"/>
    <property type="project" value="RGD"/>
</dbReference>
<dbReference type="GO" id="GO:0042159">
    <property type="term" value="P:lipoprotein catabolic process"/>
    <property type="evidence" value="ECO:0000266"/>
    <property type="project" value="RGD"/>
</dbReference>
<dbReference type="GO" id="GO:0001889">
    <property type="term" value="P:liver development"/>
    <property type="evidence" value="ECO:0000266"/>
    <property type="project" value="RGD"/>
</dbReference>
<dbReference type="GO" id="GO:0072576">
    <property type="term" value="P:liver morphogenesis"/>
    <property type="evidence" value="ECO:0000266"/>
    <property type="project" value="RGD"/>
</dbReference>
<dbReference type="GO" id="GO:0030324">
    <property type="term" value="P:lung development"/>
    <property type="evidence" value="ECO:0000266"/>
    <property type="project" value="RGD"/>
</dbReference>
<dbReference type="GO" id="GO:0007040">
    <property type="term" value="P:lysosome organization"/>
    <property type="evidence" value="ECO:0000266"/>
    <property type="project" value="RGD"/>
</dbReference>
<dbReference type="GO" id="GO:0061519">
    <property type="term" value="P:macrophage homeostasis"/>
    <property type="evidence" value="ECO:0000266"/>
    <property type="project" value="RGD"/>
</dbReference>
<dbReference type="GO" id="GO:0007005">
    <property type="term" value="P:mitochondrion organization"/>
    <property type="evidence" value="ECO:0000266"/>
    <property type="project" value="RGD"/>
</dbReference>
<dbReference type="GO" id="GO:0000278">
    <property type="term" value="P:mitotic cell cycle"/>
    <property type="evidence" value="ECO:0000266"/>
    <property type="project" value="RGD"/>
</dbReference>
<dbReference type="GO" id="GO:0140962">
    <property type="term" value="P:multicellular organismal-level chemical homeostasis"/>
    <property type="evidence" value="ECO:0000266"/>
    <property type="project" value="RGD"/>
</dbReference>
<dbReference type="GO" id="GO:0048871">
    <property type="term" value="P:multicellular organismal-level homeostasis"/>
    <property type="evidence" value="ECO:0000266"/>
    <property type="project" value="RGD"/>
</dbReference>
<dbReference type="GO" id="GO:0033028">
    <property type="term" value="P:myeloid cell apoptotic process"/>
    <property type="evidence" value="ECO:0000266"/>
    <property type="project" value="RGD"/>
</dbReference>
<dbReference type="GO" id="GO:0030099">
    <property type="term" value="P:myeloid cell differentiation"/>
    <property type="evidence" value="ECO:0000266"/>
    <property type="project" value="RGD"/>
</dbReference>
<dbReference type="GO" id="GO:0006638">
    <property type="term" value="P:neutral lipid metabolic process"/>
    <property type="evidence" value="ECO:0000266"/>
    <property type="project" value="RGD"/>
</dbReference>
<dbReference type="GO" id="GO:0050862">
    <property type="term" value="P:positive regulation of T cell receptor signaling pathway"/>
    <property type="evidence" value="ECO:0000266"/>
    <property type="project" value="RGD"/>
</dbReference>
<dbReference type="GO" id="GO:0012501">
    <property type="term" value="P:programmed cell death"/>
    <property type="evidence" value="ECO:0000266"/>
    <property type="project" value="RGD"/>
</dbReference>
<dbReference type="GO" id="GO:1903409">
    <property type="term" value="P:reactive oxygen species biosynthetic process"/>
    <property type="evidence" value="ECO:0000266"/>
    <property type="project" value="RGD"/>
</dbReference>
<dbReference type="GO" id="GO:0042391">
    <property type="term" value="P:regulation of membrane potential"/>
    <property type="evidence" value="ECO:0000266"/>
    <property type="project" value="RGD"/>
</dbReference>
<dbReference type="GO" id="GO:0051881">
    <property type="term" value="P:regulation of mitochondrial membrane potential"/>
    <property type="evidence" value="ECO:0000266"/>
    <property type="project" value="RGD"/>
</dbReference>
<dbReference type="GO" id="GO:0002536">
    <property type="term" value="P:respiratory burst involved in inflammatory response"/>
    <property type="evidence" value="ECO:0000266"/>
    <property type="project" value="RGD"/>
</dbReference>
<dbReference type="GO" id="GO:0009409">
    <property type="term" value="P:response to cold"/>
    <property type="evidence" value="ECO:0000266"/>
    <property type="project" value="RGD"/>
</dbReference>
<dbReference type="GO" id="GO:0002021">
    <property type="term" value="P:response to dietary excess"/>
    <property type="evidence" value="ECO:0000266"/>
    <property type="project" value="RGD"/>
</dbReference>
<dbReference type="GO" id="GO:0033993">
    <property type="term" value="P:response to lipid"/>
    <property type="evidence" value="ECO:0000266"/>
    <property type="project" value="RGD"/>
</dbReference>
<dbReference type="GO" id="GO:1901355">
    <property type="term" value="P:response to rapamycin"/>
    <property type="evidence" value="ECO:0000266"/>
    <property type="project" value="RGD"/>
</dbReference>
<dbReference type="GO" id="GO:0033189">
    <property type="term" value="P:response to vitamin A"/>
    <property type="evidence" value="ECO:0000266"/>
    <property type="project" value="RGD"/>
</dbReference>
<dbReference type="GO" id="GO:0009410">
    <property type="term" value="P:response to xenobiotic stimulus"/>
    <property type="evidence" value="ECO:0000266"/>
    <property type="project" value="RGD"/>
</dbReference>
<dbReference type="GO" id="GO:0001523">
    <property type="term" value="P:retinoid metabolic process"/>
    <property type="evidence" value="ECO:0000266"/>
    <property type="project" value="RGD"/>
</dbReference>
<dbReference type="GO" id="GO:0007264">
    <property type="term" value="P:small GTPase-mediated signal transduction"/>
    <property type="evidence" value="ECO:0000266"/>
    <property type="project" value="RGD"/>
</dbReference>
<dbReference type="GO" id="GO:0048536">
    <property type="term" value="P:spleen development"/>
    <property type="evidence" value="ECO:0000266"/>
    <property type="project" value="RGD"/>
</dbReference>
<dbReference type="GO" id="GO:0016125">
    <property type="term" value="P:sterol metabolic process"/>
    <property type="evidence" value="ECO:0000314"/>
    <property type="project" value="RGD"/>
</dbReference>
<dbReference type="GO" id="GO:0070231">
    <property type="term" value="P:T cell apoptotic process"/>
    <property type="evidence" value="ECO:0000266"/>
    <property type="project" value="RGD"/>
</dbReference>
<dbReference type="GO" id="GO:0030217">
    <property type="term" value="P:T cell differentiation"/>
    <property type="evidence" value="ECO:0000266"/>
    <property type="project" value="RGD"/>
</dbReference>
<dbReference type="GO" id="GO:0042098">
    <property type="term" value="P:T cell proliferation"/>
    <property type="evidence" value="ECO:0000266"/>
    <property type="project" value="RGD"/>
</dbReference>
<dbReference type="GO" id="GO:0048771">
    <property type="term" value="P:tissue remodeling"/>
    <property type="evidence" value="ECO:0000266"/>
    <property type="project" value="RGD"/>
</dbReference>
<dbReference type="GO" id="GO:0031929">
    <property type="term" value="P:TOR signaling"/>
    <property type="evidence" value="ECO:0000266"/>
    <property type="project" value="RGD"/>
</dbReference>
<dbReference type="GO" id="GO:0006641">
    <property type="term" value="P:triglyceride metabolic process"/>
    <property type="evidence" value="ECO:0000266"/>
    <property type="project" value="RGD"/>
</dbReference>
<dbReference type="GO" id="GO:0071830">
    <property type="term" value="P:triglyceride-rich lipoprotein particle clearance"/>
    <property type="evidence" value="ECO:0000266"/>
    <property type="project" value="RGD"/>
</dbReference>
<dbReference type="GO" id="GO:0006776">
    <property type="term" value="P:vitamin A metabolic process"/>
    <property type="evidence" value="ECO:0000266"/>
    <property type="project" value="RGD"/>
</dbReference>
<dbReference type="FunFam" id="3.40.50.1820:FF:000012">
    <property type="entry name" value="Lipase"/>
    <property type="match status" value="1"/>
</dbReference>
<dbReference type="Gene3D" id="3.40.50.1820">
    <property type="entry name" value="alpha/beta hydrolase"/>
    <property type="match status" value="1"/>
</dbReference>
<dbReference type="InterPro" id="IPR000073">
    <property type="entry name" value="AB_hydrolase_1"/>
</dbReference>
<dbReference type="InterPro" id="IPR029058">
    <property type="entry name" value="AB_hydrolase_fold"/>
</dbReference>
<dbReference type="InterPro" id="IPR025483">
    <property type="entry name" value="Lipase_euk"/>
</dbReference>
<dbReference type="PANTHER" id="PTHR11005">
    <property type="entry name" value="LYSOSOMAL ACID LIPASE-RELATED"/>
    <property type="match status" value="1"/>
</dbReference>
<dbReference type="Pfam" id="PF00561">
    <property type="entry name" value="Abhydrolase_1"/>
    <property type="match status" value="1"/>
</dbReference>
<dbReference type="PIRSF" id="PIRSF000862">
    <property type="entry name" value="Steryl_ester_lip"/>
    <property type="match status" value="1"/>
</dbReference>
<dbReference type="SUPFAM" id="SSF53474">
    <property type="entry name" value="alpha/beta-Hydrolases"/>
    <property type="match status" value="1"/>
</dbReference>
<gene>
    <name type="primary">Lipa</name>
    <name type="synonym">Lal</name>
    <name type="synonym">Lip1</name>
</gene>
<proteinExistence type="evidence at transcript level"/>
<sequence length="397" mass="45186">MQLLGRVICFVVGILLSGGPTGTISAVDPEANMNVTEIIMHWGYPEHSVQTGDGYILGVHRIPHGRKNQFDKGPKPVVYLQWRHGFLADSSNWVTNIDNNSLGFILADAGFDVWMGNSRGNTWSRKHKTLSVSQDEYWAFSFDEMAKYDLPASINYILNKTGQEQLYNVGHSQGCTIGFIAFSQMPELAKKVKMFFALAPVLSLNFASGPMVKLGRLPDLLLEDLFGQKQFLPQSAMVKWLSTHICTHVIMKELCANIFFLICGFNEKNLNMSRVDVYTTHCPAGTSVQNMVHWTQVVKYHKLQAFDWGSSDKNYFHYNQSYPPLYSIKDMQLPTALWSGGKDWLADTSDINILLTEIPTLVYHKNIPEWDHLDFIWGLDAPWRLYNEVVSLMKKYQ</sequence>